<keyword id="KW-0143">Chaperone</keyword>
<keyword id="KW-0963">Cytoplasm</keyword>
<keyword id="KW-0235">DNA replication</keyword>
<keyword id="KW-0479">Metal-binding</keyword>
<keyword id="KW-1185">Reference proteome</keyword>
<keyword id="KW-0677">Repeat</keyword>
<keyword id="KW-0346">Stress response</keyword>
<keyword id="KW-0862">Zinc</keyword>
<keyword id="KW-0863">Zinc-finger</keyword>
<comment type="function">
    <text evidence="1">Participates actively in the response to hyperosmotic and heat shock by preventing the aggregation of stress-denatured proteins and by disaggregating proteins, also in an autonomous, DnaK-independent fashion. Unfolded proteins bind initially to DnaJ; upon interaction with the DnaJ-bound protein, DnaK hydrolyzes its bound ATP, resulting in the formation of a stable complex. GrpE releases ADP from DnaK; ATP binding to DnaK triggers the release of the substrate protein, thus completing the reaction cycle. Several rounds of ATP-dependent interactions between DnaJ, DnaK and GrpE are required for fully efficient folding. Also involved, together with DnaK and GrpE, in the DNA replication of plasmids through activation of initiation proteins.</text>
</comment>
<comment type="cofactor">
    <cofactor evidence="1">
        <name>Zn(2+)</name>
        <dbReference type="ChEBI" id="CHEBI:29105"/>
    </cofactor>
    <text evidence="1">Binds 2 Zn(2+) ions per monomer.</text>
</comment>
<comment type="subunit">
    <text evidence="1">Homodimer.</text>
</comment>
<comment type="subcellular location">
    <subcellularLocation>
        <location evidence="1">Cytoplasm</location>
    </subcellularLocation>
</comment>
<comment type="domain">
    <text evidence="1">The J domain is necessary and sufficient to stimulate DnaK ATPase activity. Zinc center 1 plays an important role in the autonomous, DnaK-independent chaperone activity of DnaJ. Zinc center 2 is essential for interaction with DnaK and for DnaJ activity.</text>
</comment>
<comment type="similarity">
    <text evidence="1">Belongs to the DnaJ family.</text>
</comment>
<protein>
    <recommendedName>
        <fullName evidence="1">Chaperone protein DnaJ</fullName>
    </recommendedName>
</protein>
<dbReference type="EMBL" id="AM180088">
    <property type="protein sequence ID" value="CAJ52752.1"/>
    <property type="molecule type" value="Genomic_DNA"/>
</dbReference>
<dbReference type="RefSeq" id="WP_011571868.1">
    <property type="nucleotide sequence ID" value="NC_008212.1"/>
</dbReference>
<dbReference type="SMR" id="Q18GZ3"/>
<dbReference type="STRING" id="362976.HQ_2641A"/>
<dbReference type="GeneID" id="4193922"/>
<dbReference type="KEGG" id="hwa:HQ_2641A"/>
<dbReference type="eggNOG" id="arCOG02846">
    <property type="taxonomic scope" value="Archaea"/>
</dbReference>
<dbReference type="HOGENOM" id="CLU_017633_0_7_2"/>
<dbReference type="Proteomes" id="UP000001975">
    <property type="component" value="Chromosome"/>
</dbReference>
<dbReference type="GO" id="GO:0005737">
    <property type="term" value="C:cytoplasm"/>
    <property type="evidence" value="ECO:0007669"/>
    <property type="project" value="UniProtKB-SubCell"/>
</dbReference>
<dbReference type="GO" id="GO:0005524">
    <property type="term" value="F:ATP binding"/>
    <property type="evidence" value="ECO:0007669"/>
    <property type="project" value="InterPro"/>
</dbReference>
<dbReference type="GO" id="GO:0031072">
    <property type="term" value="F:heat shock protein binding"/>
    <property type="evidence" value="ECO:0007669"/>
    <property type="project" value="InterPro"/>
</dbReference>
<dbReference type="GO" id="GO:0051082">
    <property type="term" value="F:unfolded protein binding"/>
    <property type="evidence" value="ECO:0007669"/>
    <property type="project" value="UniProtKB-UniRule"/>
</dbReference>
<dbReference type="GO" id="GO:0008270">
    <property type="term" value="F:zinc ion binding"/>
    <property type="evidence" value="ECO:0007669"/>
    <property type="project" value="UniProtKB-UniRule"/>
</dbReference>
<dbReference type="GO" id="GO:0051085">
    <property type="term" value="P:chaperone cofactor-dependent protein refolding"/>
    <property type="evidence" value="ECO:0007669"/>
    <property type="project" value="TreeGrafter"/>
</dbReference>
<dbReference type="GO" id="GO:0006260">
    <property type="term" value="P:DNA replication"/>
    <property type="evidence" value="ECO:0007669"/>
    <property type="project" value="UniProtKB-KW"/>
</dbReference>
<dbReference type="GO" id="GO:0042026">
    <property type="term" value="P:protein refolding"/>
    <property type="evidence" value="ECO:0007669"/>
    <property type="project" value="TreeGrafter"/>
</dbReference>
<dbReference type="GO" id="GO:0009408">
    <property type="term" value="P:response to heat"/>
    <property type="evidence" value="ECO:0007669"/>
    <property type="project" value="InterPro"/>
</dbReference>
<dbReference type="CDD" id="cd06257">
    <property type="entry name" value="DnaJ"/>
    <property type="match status" value="1"/>
</dbReference>
<dbReference type="CDD" id="cd10747">
    <property type="entry name" value="DnaJ_C"/>
    <property type="match status" value="1"/>
</dbReference>
<dbReference type="CDD" id="cd10719">
    <property type="entry name" value="DnaJ_zf"/>
    <property type="match status" value="1"/>
</dbReference>
<dbReference type="FunFam" id="2.60.260.20:FF:000005">
    <property type="entry name" value="Chaperone protein dnaJ 1, mitochondrial"/>
    <property type="match status" value="1"/>
</dbReference>
<dbReference type="FunFam" id="2.10.230.10:FF:000002">
    <property type="entry name" value="Molecular chaperone DnaJ"/>
    <property type="match status" value="1"/>
</dbReference>
<dbReference type="Gene3D" id="1.10.287.110">
    <property type="entry name" value="DnaJ domain"/>
    <property type="match status" value="1"/>
</dbReference>
<dbReference type="Gene3D" id="2.10.230.10">
    <property type="entry name" value="Heat shock protein DnaJ, cysteine-rich domain"/>
    <property type="match status" value="1"/>
</dbReference>
<dbReference type="Gene3D" id="2.60.260.20">
    <property type="entry name" value="Urease metallochaperone UreE, N-terminal domain"/>
    <property type="match status" value="2"/>
</dbReference>
<dbReference type="HAMAP" id="MF_01152">
    <property type="entry name" value="DnaJ"/>
    <property type="match status" value="1"/>
</dbReference>
<dbReference type="InterPro" id="IPR012724">
    <property type="entry name" value="DnaJ"/>
</dbReference>
<dbReference type="InterPro" id="IPR002939">
    <property type="entry name" value="DnaJ_C"/>
</dbReference>
<dbReference type="InterPro" id="IPR001623">
    <property type="entry name" value="DnaJ_domain"/>
</dbReference>
<dbReference type="InterPro" id="IPR008971">
    <property type="entry name" value="HSP40/DnaJ_pept-bd"/>
</dbReference>
<dbReference type="InterPro" id="IPR001305">
    <property type="entry name" value="HSP_DnaJ_Cys-rich_dom"/>
</dbReference>
<dbReference type="InterPro" id="IPR036410">
    <property type="entry name" value="HSP_DnaJ_Cys-rich_dom_sf"/>
</dbReference>
<dbReference type="InterPro" id="IPR036869">
    <property type="entry name" value="J_dom_sf"/>
</dbReference>
<dbReference type="NCBIfam" id="TIGR02349">
    <property type="entry name" value="DnaJ_bact"/>
    <property type="match status" value="1"/>
</dbReference>
<dbReference type="NCBIfam" id="NF008035">
    <property type="entry name" value="PRK10767.1"/>
    <property type="match status" value="1"/>
</dbReference>
<dbReference type="PANTHER" id="PTHR43096">
    <property type="entry name" value="DNAJ HOMOLOG 1, MITOCHONDRIAL-RELATED"/>
    <property type="match status" value="1"/>
</dbReference>
<dbReference type="PANTHER" id="PTHR43096:SF52">
    <property type="entry name" value="DNAJ HOMOLOG 1, MITOCHONDRIAL-RELATED"/>
    <property type="match status" value="1"/>
</dbReference>
<dbReference type="Pfam" id="PF00226">
    <property type="entry name" value="DnaJ"/>
    <property type="match status" value="1"/>
</dbReference>
<dbReference type="Pfam" id="PF01556">
    <property type="entry name" value="DnaJ_C"/>
    <property type="match status" value="1"/>
</dbReference>
<dbReference type="Pfam" id="PF00684">
    <property type="entry name" value="DnaJ_CXXCXGXG"/>
    <property type="match status" value="1"/>
</dbReference>
<dbReference type="PRINTS" id="PR00625">
    <property type="entry name" value="JDOMAIN"/>
</dbReference>
<dbReference type="SMART" id="SM00271">
    <property type="entry name" value="DnaJ"/>
    <property type="match status" value="1"/>
</dbReference>
<dbReference type="SUPFAM" id="SSF46565">
    <property type="entry name" value="Chaperone J-domain"/>
    <property type="match status" value="1"/>
</dbReference>
<dbReference type="SUPFAM" id="SSF57938">
    <property type="entry name" value="DnaJ/Hsp40 cysteine-rich domain"/>
    <property type="match status" value="1"/>
</dbReference>
<dbReference type="SUPFAM" id="SSF49493">
    <property type="entry name" value="HSP40/DnaJ peptide-binding domain"/>
    <property type="match status" value="2"/>
</dbReference>
<dbReference type="PROSITE" id="PS50076">
    <property type="entry name" value="DNAJ_2"/>
    <property type="match status" value="1"/>
</dbReference>
<dbReference type="PROSITE" id="PS51188">
    <property type="entry name" value="ZF_CR"/>
    <property type="match status" value="1"/>
</dbReference>
<organism>
    <name type="scientific">Haloquadratum walsbyi (strain DSM 16790 / HBSQ001)</name>
    <dbReference type="NCBI Taxonomy" id="362976"/>
    <lineage>
        <taxon>Archaea</taxon>
        <taxon>Methanobacteriati</taxon>
        <taxon>Methanobacteriota</taxon>
        <taxon>Stenosarchaea group</taxon>
        <taxon>Halobacteria</taxon>
        <taxon>Halobacteriales</taxon>
        <taxon>Haloferacaceae</taxon>
        <taxon>Haloquadratum</taxon>
    </lineage>
</organism>
<accession>Q18GZ3</accession>
<name>DNAJ_HALWD</name>
<feature type="chain" id="PRO_1000085207" description="Chaperone protein DnaJ">
    <location>
        <begin position="1"/>
        <end position="387"/>
    </location>
</feature>
<feature type="domain" description="J" evidence="1">
    <location>
        <begin position="4"/>
        <end position="68"/>
    </location>
</feature>
<feature type="repeat" description="CXXCXGXG motif">
    <location>
        <begin position="161"/>
        <end position="168"/>
    </location>
</feature>
<feature type="repeat" description="CXXCXGXG motif">
    <location>
        <begin position="178"/>
        <end position="185"/>
    </location>
</feature>
<feature type="repeat" description="CXXCXGXG motif">
    <location>
        <begin position="204"/>
        <end position="211"/>
    </location>
</feature>
<feature type="repeat" description="CXXCXGXG motif">
    <location>
        <begin position="218"/>
        <end position="225"/>
    </location>
</feature>
<feature type="zinc finger region" description="CR-type" evidence="1">
    <location>
        <begin position="148"/>
        <end position="230"/>
    </location>
</feature>
<feature type="region of interest" description="Disordered" evidence="2">
    <location>
        <begin position="76"/>
        <end position="135"/>
    </location>
</feature>
<feature type="compositionally biased region" description="Gly residues" evidence="2">
    <location>
        <begin position="80"/>
        <end position="105"/>
    </location>
</feature>
<feature type="compositionally biased region" description="Low complexity" evidence="2">
    <location>
        <begin position="121"/>
        <end position="133"/>
    </location>
</feature>
<feature type="binding site" evidence="1">
    <location>
        <position position="161"/>
    </location>
    <ligand>
        <name>Zn(2+)</name>
        <dbReference type="ChEBI" id="CHEBI:29105"/>
        <label>1</label>
    </ligand>
</feature>
<feature type="binding site" evidence="1">
    <location>
        <position position="164"/>
    </location>
    <ligand>
        <name>Zn(2+)</name>
        <dbReference type="ChEBI" id="CHEBI:29105"/>
        <label>1</label>
    </ligand>
</feature>
<feature type="binding site" evidence="1">
    <location>
        <position position="178"/>
    </location>
    <ligand>
        <name>Zn(2+)</name>
        <dbReference type="ChEBI" id="CHEBI:29105"/>
        <label>2</label>
    </ligand>
</feature>
<feature type="binding site" evidence="1">
    <location>
        <position position="181"/>
    </location>
    <ligand>
        <name>Zn(2+)</name>
        <dbReference type="ChEBI" id="CHEBI:29105"/>
        <label>2</label>
    </ligand>
</feature>
<feature type="binding site" evidence="1">
    <location>
        <position position="204"/>
    </location>
    <ligand>
        <name>Zn(2+)</name>
        <dbReference type="ChEBI" id="CHEBI:29105"/>
        <label>2</label>
    </ligand>
</feature>
<feature type="binding site" evidence="1">
    <location>
        <position position="207"/>
    </location>
    <ligand>
        <name>Zn(2+)</name>
        <dbReference type="ChEBI" id="CHEBI:29105"/>
        <label>2</label>
    </ligand>
</feature>
<feature type="binding site" evidence="1">
    <location>
        <position position="218"/>
    </location>
    <ligand>
        <name>Zn(2+)</name>
        <dbReference type="ChEBI" id="CHEBI:29105"/>
        <label>1</label>
    </ligand>
</feature>
<feature type="binding site" evidence="1">
    <location>
        <position position="221"/>
    </location>
    <ligand>
        <name>Zn(2+)</name>
        <dbReference type="ChEBI" id="CHEBI:29105"/>
        <label>1</label>
    </ligand>
</feature>
<gene>
    <name evidence="1" type="primary">dnaJ</name>
    <name type="ordered locus">HQ_2641A</name>
</gene>
<evidence type="ECO:0000255" key="1">
    <source>
        <dbReference type="HAMAP-Rule" id="MF_01152"/>
    </source>
</evidence>
<evidence type="ECO:0000256" key="2">
    <source>
        <dbReference type="SAM" id="MobiDB-lite"/>
    </source>
</evidence>
<sequence>MSEDFYDVLGVSRNADGDDIKQAYRKKAAKYHPDVSDDPNAEEKFKKIKKAKEVLTDGEKRQMYDQLGHDRFQQAEKRGGVGGGGNSSGGSARGDPFGGMGGQGSPFGDIFEQFFGGGQGQRRQGNRPRQGQNLQTRVQLDLEEVYTGVEKQFTVRRPEKCPDCNGRGHPSDADVRTCPQCNGQGQTTTVRETALGRVQQTQTCPRCDGSGEMYTQTCSTCNGDGVTRQEATLSVDIPAGIRDGQTLRMEREGAPGDNGGPRGDLLIDVSVRDHPDFERDGDDLYYRLAISFPQAVFGSTVEVPTVNGETTLDISAGTQSGEEFRIRNEGIPHLRGRGTGDLYVQVQIVTPENLSQKQREALEAFAEAGGESVDVSQGFFEKIKSSF</sequence>
<proteinExistence type="inferred from homology"/>
<reference key="1">
    <citation type="journal article" date="2006" name="BMC Genomics">
        <title>The genome of the square archaeon Haloquadratum walsbyi: life at the limits of water activity.</title>
        <authorList>
            <person name="Bolhuis H."/>
            <person name="Palm P."/>
            <person name="Wende A."/>
            <person name="Falb M."/>
            <person name="Rampp M."/>
            <person name="Rodriguez-Valera F."/>
            <person name="Pfeiffer F."/>
            <person name="Oesterhelt D."/>
        </authorList>
    </citation>
    <scope>NUCLEOTIDE SEQUENCE [LARGE SCALE GENOMIC DNA]</scope>
    <source>
        <strain>DSM 16790 / HBSQ001</strain>
    </source>
</reference>